<keyword id="KW-0119">Carbohydrate metabolism</keyword>
<keyword id="KW-0413">Isomerase</keyword>
<keyword id="KW-0521">NADP</keyword>
<reference key="1">
    <citation type="journal article" date="2010" name="Genome Biol. Evol.">
        <title>Continuing evolution of Burkholderia mallei through genome reduction and large-scale rearrangements.</title>
        <authorList>
            <person name="Losada L."/>
            <person name="Ronning C.M."/>
            <person name="DeShazer D."/>
            <person name="Woods D."/>
            <person name="Fedorova N."/>
            <person name="Kim H.S."/>
            <person name="Shabalina S.A."/>
            <person name="Pearson T.R."/>
            <person name="Brinkac L."/>
            <person name="Tan P."/>
            <person name="Nandi T."/>
            <person name="Crabtree J."/>
            <person name="Badger J."/>
            <person name="Beckstrom-Sternberg S."/>
            <person name="Saqib M."/>
            <person name="Schutzer S.E."/>
            <person name="Keim P."/>
            <person name="Nierman W.C."/>
        </authorList>
    </citation>
    <scope>NUCLEOTIDE SEQUENCE [LARGE SCALE GENOMIC DNA]</scope>
    <source>
        <strain>SAVP1</strain>
    </source>
</reference>
<comment type="function">
    <text evidence="1">Catalyzes the interconversion between ADP-D-glycero-beta-D-manno-heptose and ADP-L-glycero-beta-D-manno-heptose via an epimerization at carbon 6 of the heptose.</text>
</comment>
<comment type="catalytic activity">
    <reaction evidence="1">
        <text>ADP-D-glycero-beta-D-manno-heptose = ADP-L-glycero-beta-D-manno-heptose</text>
        <dbReference type="Rhea" id="RHEA:17577"/>
        <dbReference type="ChEBI" id="CHEBI:59967"/>
        <dbReference type="ChEBI" id="CHEBI:61506"/>
        <dbReference type="EC" id="5.1.3.20"/>
    </reaction>
</comment>
<comment type="cofactor">
    <cofactor evidence="1">
        <name>NADP(+)</name>
        <dbReference type="ChEBI" id="CHEBI:58349"/>
    </cofactor>
    <text evidence="1">Binds 1 NADP(+) per subunit.</text>
</comment>
<comment type="pathway">
    <text evidence="1">Nucleotide-sugar biosynthesis; ADP-L-glycero-beta-D-manno-heptose biosynthesis; ADP-L-glycero-beta-D-manno-heptose from D-glycero-beta-D-manno-heptose 7-phosphate: step 4/4.</text>
</comment>
<comment type="subunit">
    <text evidence="1">Homopentamer.</text>
</comment>
<comment type="domain">
    <text evidence="1">Contains a large N-terminal NADP-binding domain, and a smaller C-terminal substrate-binding domain.</text>
</comment>
<comment type="similarity">
    <text evidence="1">Belongs to the NAD(P)-dependent epimerase/dehydratase family. HldD subfamily.</text>
</comment>
<protein>
    <recommendedName>
        <fullName evidence="1">ADP-L-glycero-D-manno-heptose-6-epimerase</fullName>
        <ecNumber evidence="1">5.1.3.20</ecNumber>
    </recommendedName>
    <alternativeName>
        <fullName evidence="1">ADP-L-glycero-beta-D-manno-heptose-6-epimerase</fullName>
        <shortName evidence="1">ADP-glyceromanno-heptose 6-epimerase</shortName>
        <shortName evidence="1">ADP-hep 6-epimerase</shortName>
        <shortName evidence="1">AGME</shortName>
    </alternativeName>
</protein>
<dbReference type="EC" id="5.1.3.20" evidence="1"/>
<dbReference type="EMBL" id="CP000526">
    <property type="protein sequence ID" value="ABM50429.1"/>
    <property type="molecule type" value="Genomic_DNA"/>
</dbReference>
<dbReference type="SMR" id="A1V6L4"/>
<dbReference type="KEGG" id="bmv:BMASAVP1_A2565"/>
<dbReference type="HOGENOM" id="CLU_007383_1_3_4"/>
<dbReference type="UniPathway" id="UPA00356">
    <property type="reaction ID" value="UER00440"/>
</dbReference>
<dbReference type="GO" id="GO:0008712">
    <property type="term" value="F:ADP-glyceromanno-heptose 6-epimerase activity"/>
    <property type="evidence" value="ECO:0007669"/>
    <property type="project" value="UniProtKB-UniRule"/>
</dbReference>
<dbReference type="GO" id="GO:0050661">
    <property type="term" value="F:NADP binding"/>
    <property type="evidence" value="ECO:0007669"/>
    <property type="project" value="InterPro"/>
</dbReference>
<dbReference type="GO" id="GO:0097171">
    <property type="term" value="P:ADP-L-glycero-beta-D-manno-heptose biosynthetic process"/>
    <property type="evidence" value="ECO:0007669"/>
    <property type="project" value="UniProtKB-UniPathway"/>
</dbReference>
<dbReference type="GO" id="GO:0005975">
    <property type="term" value="P:carbohydrate metabolic process"/>
    <property type="evidence" value="ECO:0007669"/>
    <property type="project" value="UniProtKB-UniRule"/>
</dbReference>
<dbReference type="CDD" id="cd05248">
    <property type="entry name" value="ADP_GME_SDR_e"/>
    <property type="match status" value="1"/>
</dbReference>
<dbReference type="Gene3D" id="3.40.50.720">
    <property type="entry name" value="NAD(P)-binding Rossmann-like Domain"/>
    <property type="match status" value="1"/>
</dbReference>
<dbReference type="Gene3D" id="3.90.25.10">
    <property type="entry name" value="UDP-galactose 4-epimerase, domain 1"/>
    <property type="match status" value="1"/>
</dbReference>
<dbReference type="HAMAP" id="MF_01601">
    <property type="entry name" value="Heptose_epimerase"/>
    <property type="match status" value="1"/>
</dbReference>
<dbReference type="InterPro" id="IPR001509">
    <property type="entry name" value="Epimerase_deHydtase"/>
</dbReference>
<dbReference type="InterPro" id="IPR011912">
    <property type="entry name" value="Heptose_epim"/>
</dbReference>
<dbReference type="InterPro" id="IPR036291">
    <property type="entry name" value="NAD(P)-bd_dom_sf"/>
</dbReference>
<dbReference type="NCBIfam" id="TIGR02197">
    <property type="entry name" value="heptose_epim"/>
    <property type="match status" value="1"/>
</dbReference>
<dbReference type="PANTHER" id="PTHR43103:SF3">
    <property type="entry name" value="ADP-L-GLYCERO-D-MANNO-HEPTOSE-6-EPIMERASE"/>
    <property type="match status" value="1"/>
</dbReference>
<dbReference type="PANTHER" id="PTHR43103">
    <property type="entry name" value="NUCLEOSIDE-DIPHOSPHATE-SUGAR EPIMERASE"/>
    <property type="match status" value="1"/>
</dbReference>
<dbReference type="Pfam" id="PF01370">
    <property type="entry name" value="Epimerase"/>
    <property type="match status" value="1"/>
</dbReference>
<dbReference type="SUPFAM" id="SSF51735">
    <property type="entry name" value="NAD(P)-binding Rossmann-fold domains"/>
    <property type="match status" value="1"/>
</dbReference>
<gene>
    <name evidence="1" type="primary">hldD</name>
    <name type="ordered locus">BMASAVP1_A2565</name>
</gene>
<accession>A1V6L4</accession>
<sequence length="330" mass="37046">MTLIVTGAAGFIGANIVKALNERGETRIIAVDNLTRADKFKNLVDCEIDDYLDKTEFVERFARGDFGKVRAVFHEGACSDTMETDGRYMMDNNFRYSRAVLDACLAQGTQFLYASSAAIYGGSSRFVEAREFEAPLNVYGYSKFLFDQVIRRVMPSAKSQIAGFRYFNVYGPRESHKGRMASVAFHNFNQFRAEGKVKLFGEYNGYGPGEQTRDFVSVEDVAKVNLHFFDHPQKSGIFNLGTGRAQPFNDIATTVVNTLRALEGQPALTLAEQVEQGLVEYVPFPDALRGKYQCFTQADQTKLRAAGYDAPFLTVQEGVDRYVRWLFGQL</sequence>
<evidence type="ECO:0000255" key="1">
    <source>
        <dbReference type="HAMAP-Rule" id="MF_01601"/>
    </source>
</evidence>
<name>HLDD_BURMS</name>
<organism>
    <name type="scientific">Burkholderia mallei (strain SAVP1)</name>
    <dbReference type="NCBI Taxonomy" id="320388"/>
    <lineage>
        <taxon>Bacteria</taxon>
        <taxon>Pseudomonadati</taxon>
        <taxon>Pseudomonadota</taxon>
        <taxon>Betaproteobacteria</taxon>
        <taxon>Burkholderiales</taxon>
        <taxon>Burkholderiaceae</taxon>
        <taxon>Burkholderia</taxon>
        <taxon>pseudomallei group</taxon>
    </lineage>
</organism>
<proteinExistence type="inferred from homology"/>
<feature type="chain" id="PRO_1000069347" description="ADP-L-glycero-D-manno-heptose-6-epimerase">
    <location>
        <begin position="1"/>
        <end position="330"/>
    </location>
</feature>
<feature type="active site" description="Proton acceptor" evidence="1">
    <location>
        <position position="139"/>
    </location>
</feature>
<feature type="active site" description="Proton acceptor" evidence="1">
    <location>
        <position position="177"/>
    </location>
</feature>
<feature type="binding site" evidence="1">
    <location>
        <begin position="11"/>
        <end position="12"/>
    </location>
    <ligand>
        <name>NADP(+)</name>
        <dbReference type="ChEBI" id="CHEBI:58349"/>
    </ligand>
</feature>
<feature type="binding site" evidence="1">
    <location>
        <begin position="32"/>
        <end position="33"/>
    </location>
    <ligand>
        <name>NADP(+)</name>
        <dbReference type="ChEBI" id="CHEBI:58349"/>
    </ligand>
</feature>
<feature type="binding site" evidence="1">
    <location>
        <position position="39"/>
    </location>
    <ligand>
        <name>NADP(+)</name>
        <dbReference type="ChEBI" id="CHEBI:58349"/>
    </ligand>
</feature>
<feature type="binding site" evidence="1">
    <location>
        <position position="54"/>
    </location>
    <ligand>
        <name>NADP(+)</name>
        <dbReference type="ChEBI" id="CHEBI:58349"/>
    </ligand>
</feature>
<feature type="binding site" evidence="1">
    <location>
        <begin position="75"/>
        <end position="79"/>
    </location>
    <ligand>
        <name>NADP(+)</name>
        <dbReference type="ChEBI" id="CHEBI:58349"/>
    </ligand>
</feature>
<feature type="binding site" evidence="1">
    <location>
        <position position="92"/>
    </location>
    <ligand>
        <name>NADP(+)</name>
        <dbReference type="ChEBI" id="CHEBI:58349"/>
    </ligand>
</feature>
<feature type="binding site" evidence="1">
    <location>
        <position position="143"/>
    </location>
    <ligand>
        <name>NADP(+)</name>
        <dbReference type="ChEBI" id="CHEBI:58349"/>
    </ligand>
</feature>
<feature type="binding site" evidence="1">
    <location>
        <position position="168"/>
    </location>
    <ligand>
        <name>substrate</name>
    </ligand>
</feature>
<feature type="binding site" evidence="1">
    <location>
        <position position="169"/>
    </location>
    <ligand>
        <name>NADP(+)</name>
        <dbReference type="ChEBI" id="CHEBI:58349"/>
    </ligand>
</feature>
<feature type="binding site" evidence="1">
    <location>
        <position position="177"/>
    </location>
    <ligand>
        <name>NADP(+)</name>
        <dbReference type="ChEBI" id="CHEBI:58349"/>
    </ligand>
</feature>
<feature type="binding site" evidence="1">
    <location>
        <position position="179"/>
    </location>
    <ligand>
        <name>substrate</name>
    </ligand>
</feature>
<feature type="binding site" evidence="1">
    <location>
        <position position="186"/>
    </location>
    <ligand>
        <name>substrate</name>
    </ligand>
</feature>
<feature type="binding site" evidence="1">
    <location>
        <begin position="200"/>
        <end position="203"/>
    </location>
    <ligand>
        <name>substrate</name>
    </ligand>
</feature>
<feature type="binding site" evidence="1">
    <location>
        <position position="213"/>
    </location>
    <ligand>
        <name>substrate</name>
    </ligand>
</feature>
<feature type="binding site" evidence="1">
    <location>
        <position position="292"/>
    </location>
    <ligand>
        <name>substrate</name>
    </ligand>
</feature>